<protein>
    <recommendedName>
        <fullName evidence="1">Small ribosomal subunit protein uS17</fullName>
    </recommendedName>
    <alternativeName>
        <fullName evidence="2">30S ribosomal protein S17</fullName>
    </alternativeName>
</protein>
<sequence length="88" mass="9971">MAEAEKLVRTLTGKVVSDKMDKSVVVLIERRVKHPVYGKYVSKSTKIKAHDENNECNQGDTVTIAESRPLSKTKSWTLVKIEERATRI</sequence>
<gene>
    <name evidence="1" type="primary">rpsQ</name>
    <name type="ordered locus">TERTU_0917</name>
</gene>
<name>RS17_TERTT</name>
<evidence type="ECO:0000255" key="1">
    <source>
        <dbReference type="HAMAP-Rule" id="MF_01345"/>
    </source>
</evidence>
<evidence type="ECO:0000305" key="2"/>
<proteinExistence type="inferred from homology"/>
<feature type="chain" id="PRO_1000214800" description="Small ribosomal subunit protein uS17">
    <location>
        <begin position="1"/>
        <end position="88"/>
    </location>
</feature>
<dbReference type="EMBL" id="CP001614">
    <property type="protein sequence ID" value="ACR14659.1"/>
    <property type="molecule type" value="Genomic_DNA"/>
</dbReference>
<dbReference type="RefSeq" id="WP_015820773.1">
    <property type="nucleotide sequence ID" value="NC_012997.1"/>
</dbReference>
<dbReference type="SMR" id="C5BQ70"/>
<dbReference type="STRING" id="377629.TERTU_0917"/>
<dbReference type="GeneID" id="58408691"/>
<dbReference type="GeneID" id="93857734"/>
<dbReference type="KEGG" id="ttu:TERTU_0917"/>
<dbReference type="eggNOG" id="COG0186">
    <property type="taxonomic scope" value="Bacteria"/>
</dbReference>
<dbReference type="HOGENOM" id="CLU_073626_1_1_6"/>
<dbReference type="OrthoDB" id="9811714at2"/>
<dbReference type="Proteomes" id="UP000009080">
    <property type="component" value="Chromosome"/>
</dbReference>
<dbReference type="GO" id="GO:0022627">
    <property type="term" value="C:cytosolic small ribosomal subunit"/>
    <property type="evidence" value="ECO:0007669"/>
    <property type="project" value="TreeGrafter"/>
</dbReference>
<dbReference type="GO" id="GO:0019843">
    <property type="term" value="F:rRNA binding"/>
    <property type="evidence" value="ECO:0007669"/>
    <property type="project" value="UniProtKB-UniRule"/>
</dbReference>
<dbReference type="GO" id="GO:0003735">
    <property type="term" value="F:structural constituent of ribosome"/>
    <property type="evidence" value="ECO:0007669"/>
    <property type="project" value="InterPro"/>
</dbReference>
<dbReference type="GO" id="GO:0006412">
    <property type="term" value="P:translation"/>
    <property type="evidence" value="ECO:0007669"/>
    <property type="project" value="UniProtKB-UniRule"/>
</dbReference>
<dbReference type="CDD" id="cd00364">
    <property type="entry name" value="Ribosomal_uS17"/>
    <property type="match status" value="1"/>
</dbReference>
<dbReference type="FunFam" id="2.40.50.140:FF:000014">
    <property type="entry name" value="30S ribosomal protein S17"/>
    <property type="match status" value="1"/>
</dbReference>
<dbReference type="Gene3D" id="2.40.50.140">
    <property type="entry name" value="Nucleic acid-binding proteins"/>
    <property type="match status" value="1"/>
</dbReference>
<dbReference type="HAMAP" id="MF_01345_B">
    <property type="entry name" value="Ribosomal_uS17_B"/>
    <property type="match status" value="1"/>
</dbReference>
<dbReference type="InterPro" id="IPR012340">
    <property type="entry name" value="NA-bd_OB-fold"/>
</dbReference>
<dbReference type="InterPro" id="IPR000266">
    <property type="entry name" value="Ribosomal_uS17"/>
</dbReference>
<dbReference type="InterPro" id="IPR019984">
    <property type="entry name" value="Ribosomal_uS17_bact/chlr"/>
</dbReference>
<dbReference type="InterPro" id="IPR019979">
    <property type="entry name" value="Ribosomal_uS17_CS"/>
</dbReference>
<dbReference type="NCBIfam" id="NF004123">
    <property type="entry name" value="PRK05610.1"/>
    <property type="match status" value="1"/>
</dbReference>
<dbReference type="NCBIfam" id="TIGR03635">
    <property type="entry name" value="uS17_bact"/>
    <property type="match status" value="1"/>
</dbReference>
<dbReference type="PANTHER" id="PTHR10744">
    <property type="entry name" value="40S RIBOSOMAL PROTEIN S11 FAMILY MEMBER"/>
    <property type="match status" value="1"/>
</dbReference>
<dbReference type="PANTHER" id="PTHR10744:SF1">
    <property type="entry name" value="SMALL RIBOSOMAL SUBUNIT PROTEIN US17M"/>
    <property type="match status" value="1"/>
</dbReference>
<dbReference type="Pfam" id="PF00366">
    <property type="entry name" value="Ribosomal_S17"/>
    <property type="match status" value="1"/>
</dbReference>
<dbReference type="PRINTS" id="PR00973">
    <property type="entry name" value="RIBOSOMALS17"/>
</dbReference>
<dbReference type="SUPFAM" id="SSF50249">
    <property type="entry name" value="Nucleic acid-binding proteins"/>
    <property type="match status" value="1"/>
</dbReference>
<dbReference type="PROSITE" id="PS00056">
    <property type="entry name" value="RIBOSOMAL_S17"/>
    <property type="match status" value="1"/>
</dbReference>
<comment type="function">
    <text evidence="1">One of the primary rRNA binding proteins, it binds specifically to the 5'-end of 16S ribosomal RNA.</text>
</comment>
<comment type="subunit">
    <text evidence="1">Part of the 30S ribosomal subunit.</text>
</comment>
<comment type="similarity">
    <text evidence="1">Belongs to the universal ribosomal protein uS17 family.</text>
</comment>
<accession>C5BQ70</accession>
<organism>
    <name type="scientific">Teredinibacter turnerae (strain ATCC 39867 / T7901)</name>
    <dbReference type="NCBI Taxonomy" id="377629"/>
    <lineage>
        <taxon>Bacteria</taxon>
        <taxon>Pseudomonadati</taxon>
        <taxon>Pseudomonadota</taxon>
        <taxon>Gammaproteobacteria</taxon>
        <taxon>Cellvibrionales</taxon>
        <taxon>Cellvibrionaceae</taxon>
        <taxon>Teredinibacter</taxon>
    </lineage>
</organism>
<keyword id="KW-1185">Reference proteome</keyword>
<keyword id="KW-0687">Ribonucleoprotein</keyword>
<keyword id="KW-0689">Ribosomal protein</keyword>
<keyword id="KW-0694">RNA-binding</keyword>
<keyword id="KW-0699">rRNA-binding</keyword>
<reference key="1">
    <citation type="journal article" date="2009" name="PLoS ONE">
        <title>The complete genome of Teredinibacter turnerae T7901: an intracellular endosymbiont of marine wood-boring bivalves (shipworms).</title>
        <authorList>
            <person name="Yang J.C."/>
            <person name="Madupu R."/>
            <person name="Durkin A.S."/>
            <person name="Ekborg N.A."/>
            <person name="Pedamallu C.S."/>
            <person name="Hostetler J.B."/>
            <person name="Radune D."/>
            <person name="Toms B.S."/>
            <person name="Henrissat B."/>
            <person name="Coutinho P.M."/>
            <person name="Schwarz S."/>
            <person name="Field L."/>
            <person name="Trindade-Silva A.E."/>
            <person name="Soares C.A.G."/>
            <person name="Elshahawi S."/>
            <person name="Hanora A."/>
            <person name="Schmidt E.W."/>
            <person name="Haygood M.G."/>
            <person name="Posfai J."/>
            <person name="Benner J."/>
            <person name="Madinger C."/>
            <person name="Nove J."/>
            <person name="Anton B."/>
            <person name="Chaudhary K."/>
            <person name="Foster J."/>
            <person name="Holman A."/>
            <person name="Kumar S."/>
            <person name="Lessard P.A."/>
            <person name="Luyten Y.A."/>
            <person name="Slatko B."/>
            <person name="Wood N."/>
            <person name="Wu B."/>
            <person name="Teplitski M."/>
            <person name="Mougous J.D."/>
            <person name="Ward N."/>
            <person name="Eisen J.A."/>
            <person name="Badger J.H."/>
            <person name="Distel D.L."/>
        </authorList>
    </citation>
    <scope>NUCLEOTIDE SEQUENCE [LARGE SCALE GENOMIC DNA]</scope>
    <source>
        <strain>ATCC 39867 / T7901</strain>
    </source>
</reference>